<comment type="function">
    <text evidence="2">Component of the cytochrome c oxidase, the last enzyme in the mitochondrial electron transport chain which drives oxidative phosphorylation. The respiratory chain contains 3 multisubunit complexes succinate dehydrogenase (complex II, CII), ubiquinol-cytochrome c oxidoreductase (cytochrome b-c1 complex, complex III, CIII) and cytochrome c oxidase (complex IV, CIV), that cooperate to transfer electrons derived from NADH and succinate to molecular oxygen, creating an electrochemical gradient over the inner membrane that drives transmembrane transport and the ATP synthase. Cytochrome c oxidase is the component of the respiratory chain that catalyzes the reduction of oxygen to water. Electrons originating from reduced cytochrome c in the intermembrane space (IMS) are transferred via the dinuclear copper A center (CU(A)) of subunit 2 and heme A of subunit 1 to the active site in subunit 1, a binuclear center (BNC) formed by heme A3 and copper B (CU(B)). The BNC reduces molecular oxygen to 2 water molecules using 4 electrons from cytochrome c in the IMS and 4 protons from the mitochondrial matrix.</text>
</comment>
<comment type="pathway">
    <text evidence="2">Energy metabolism; oxidative phosphorylation.</text>
</comment>
<comment type="subunit">
    <text evidence="2">Component of the cytochrome c oxidase (complex IV, CIV), a multisubunit enzyme composed of a catalytic core of 3 subunits and several supernumerary subunits. The complex exists as a monomer or a dimer and forms supercomplexes (SCs) in the inner mitochondrial membrane with ubiquinol-cytochrome c oxidoreductase (cytochrome b-c1 complex, complex III, CIII).</text>
</comment>
<comment type="subcellular location">
    <subcellularLocation>
        <location evidence="2">Mitochondrion inner membrane</location>
        <topology evidence="2">Peripheral membrane protein</topology>
        <orientation evidence="2">Matrix side</orientation>
    </subcellularLocation>
</comment>
<comment type="similarity">
    <text evidence="4">Belongs to the cytochrome c oxidase subunit 5B family.</text>
</comment>
<sequence length="164" mass="18162">MFMNSMLRVSRQRAAVRSTVSLYRGFVSASIRRNEQNVVKAAAQELANAKEPSDLIGPGGRDGEVPTDLEQATGLERYELLSELSGRDAFDMKPLDASRKGTLTDPIMVTSLDPYRHIGCTGSPSGSHNLIWMTVYKDKLRRCPECGSVYKLKFMGDPNAEHSH</sequence>
<name>COX4_SCHPO</name>
<gene>
    <name type="primary">cox4</name>
    <name type="ORF">SPAC1296.02</name>
</gene>
<evidence type="ECO:0000250" key="1"/>
<evidence type="ECO:0000250" key="2">
    <source>
        <dbReference type="UniProtKB" id="P04037"/>
    </source>
</evidence>
<evidence type="ECO:0000255" key="3">
    <source>
        <dbReference type="PROSITE-ProRule" id="PRU00692"/>
    </source>
</evidence>
<evidence type="ECO:0000305" key="4"/>
<evidence type="ECO:0007829" key="5">
    <source>
        <dbReference type="PDB" id="8C8Q"/>
    </source>
</evidence>
<reference key="1">
    <citation type="submission" date="1997-01" db="EMBL/GenBank/DDBJ databases">
        <title>S.pombe cox4 gene.</title>
        <authorList>
            <person name="Kawamukai M."/>
        </authorList>
    </citation>
    <scope>NUCLEOTIDE SEQUENCE [MRNA]</scope>
</reference>
<reference key="2">
    <citation type="journal article" date="2002" name="Nature">
        <title>The genome sequence of Schizosaccharomyces pombe.</title>
        <authorList>
            <person name="Wood V."/>
            <person name="Gwilliam R."/>
            <person name="Rajandream M.A."/>
            <person name="Lyne M.H."/>
            <person name="Lyne R."/>
            <person name="Stewart A."/>
            <person name="Sgouros J.G."/>
            <person name="Peat N."/>
            <person name="Hayles J."/>
            <person name="Baker S.G."/>
            <person name="Basham D."/>
            <person name="Bowman S."/>
            <person name="Brooks K."/>
            <person name="Brown D."/>
            <person name="Brown S."/>
            <person name="Chillingworth T."/>
            <person name="Churcher C.M."/>
            <person name="Collins M."/>
            <person name="Connor R."/>
            <person name="Cronin A."/>
            <person name="Davis P."/>
            <person name="Feltwell T."/>
            <person name="Fraser A."/>
            <person name="Gentles S."/>
            <person name="Goble A."/>
            <person name="Hamlin N."/>
            <person name="Harris D.E."/>
            <person name="Hidalgo J."/>
            <person name="Hodgson G."/>
            <person name="Holroyd S."/>
            <person name="Hornsby T."/>
            <person name="Howarth S."/>
            <person name="Huckle E.J."/>
            <person name="Hunt S."/>
            <person name="Jagels K."/>
            <person name="James K.D."/>
            <person name="Jones L."/>
            <person name="Jones M."/>
            <person name="Leather S."/>
            <person name="McDonald S."/>
            <person name="McLean J."/>
            <person name="Mooney P."/>
            <person name="Moule S."/>
            <person name="Mungall K.L."/>
            <person name="Murphy L.D."/>
            <person name="Niblett D."/>
            <person name="Odell C."/>
            <person name="Oliver K."/>
            <person name="O'Neil S."/>
            <person name="Pearson D."/>
            <person name="Quail M.A."/>
            <person name="Rabbinowitsch E."/>
            <person name="Rutherford K.M."/>
            <person name="Rutter S."/>
            <person name="Saunders D."/>
            <person name="Seeger K."/>
            <person name="Sharp S."/>
            <person name="Skelton J."/>
            <person name="Simmonds M.N."/>
            <person name="Squares R."/>
            <person name="Squares S."/>
            <person name="Stevens K."/>
            <person name="Taylor K."/>
            <person name="Taylor R.G."/>
            <person name="Tivey A."/>
            <person name="Walsh S.V."/>
            <person name="Warren T."/>
            <person name="Whitehead S."/>
            <person name="Woodward J.R."/>
            <person name="Volckaert G."/>
            <person name="Aert R."/>
            <person name="Robben J."/>
            <person name="Grymonprez B."/>
            <person name="Weltjens I."/>
            <person name="Vanstreels E."/>
            <person name="Rieger M."/>
            <person name="Schaefer M."/>
            <person name="Mueller-Auer S."/>
            <person name="Gabel C."/>
            <person name="Fuchs M."/>
            <person name="Duesterhoeft A."/>
            <person name="Fritzc C."/>
            <person name="Holzer E."/>
            <person name="Moestl D."/>
            <person name="Hilbert H."/>
            <person name="Borzym K."/>
            <person name="Langer I."/>
            <person name="Beck A."/>
            <person name="Lehrach H."/>
            <person name="Reinhardt R."/>
            <person name="Pohl T.M."/>
            <person name="Eger P."/>
            <person name="Zimmermann W."/>
            <person name="Wedler H."/>
            <person name="Wambutt R."/>
            <person name="Purnelle B."/>
            <person name="Goffeau A."/>
            <person name="Cadieu E."/>
            <person name="Dreano S."/>
            <person name="Gloux S."/>
            <person name="Lelaure V."/>
            <person name="Mottier S."/>
            <person name="Galibert F."/>
            <person name="Aves S.J."/>
            <person name="Xiang Z."/>
            <person name="Hunt C."/>
            <person name="Moore K."/>
            <person name="Hurst S.M."/>
            <person name="Lucas M."/>
            <person name="Rochet M."/>
            <person name="Gaillardin C."/>
            <person name="Tallada V.A."/>
            <person name="Garzon A."/>
            <person name="Thode G."/>
            <person name="Daga R.R."/>
            <person name="Cruzado L."/>
            <person name="Jimenez J."/>
            <person name="Sanchez M."/>
            <person name="del Rey F."/>
            <person name="Benito J."/>
            <person name="Dominguez A."/>
            <person name="Revuelta J.L."/>
            <person name="Moreno S."/>
            <person name="Armstrong J."/>
            <person name="Forsburg S.L."/>
            <person name="Cerutti L."/>
            <person name="Lowe T."/>
            <person name="McCombie W.R."/>
            <person name="Paulsen I."/>
            <person name="Potashkin J."/>
            <person name="Shpakovski G.V."/>
            <person name="Ussery D."/>
            <person name="Barrell B.G."/>
            <person name="Nurse P."/>
        </authorList>
    </citation>
    <scope>NUCLEOTIDE SEQUENCE [LARGE SCALE GENOMIC DNA]</scope>
    <source>
        <strain>972 / ATCC 24843</strain>
    </source>
</reference>
<dbReference type="EMBL" id="AB000399">
    <property type="protein sequence ID" value="BAA19097.1"/>
    <property type="molecule type" value="mRNA"/>
</dbReference>
<dbReference type="EMBL" id="CU329670">
    <property type="protein sequence ID" value="CAB36508.1"/>
    <property type="molecule type" value="Genomic_DNA"/>
</dbReference>
<dbReference type="PIR" id="T37563">
    <property type="entry name" value="T37563"/>
</dbReference>
<dbReference type="RefSeq" id="NP_593042.1">
    <property type="nucleotide sequence ID" value="NM_001018441.2"/>
</dbReference>
<dbReference type="PDB" id="8C8Q">
    <property type="method" value="EM"/>
    <property type="resolution" value="3.36 A"/>
    <property type="chains" value="D=1-159"/>
</dbReference>
<dbReference type="PDB" id="8Q1B">
    <property type="method" value="EM"/>
    <property type="resolution" value="3.40 A"/>
    <property type="chains" value="d=1-159"/>
</dbReference>
<dbReference type="PDBsum" id="8C8Q"/>
<dbReference type="PDBsum" id="8Q1B"/>
<dbReference type="EMDB" id="EMD-16491"/>
<dbReference type="EMDB" id="EMD-18062"/>
<dbReference type="SMR" id="P79010"/>
<dbReference type="BioGRID" id="279461">
    <property type="interactions" value="3"/>
</dbReference>
<dbReference type="ComplexPortal" id="CPX-9641">
    <property type="entry name" value="Mitochondrial respiratory chain complex IV"/>
</dbReference>
<dbReference type="FunCoup" id="P79010">
    <property type="interactions" value="271"/>
</dbReference>
<dbReference type="IntAct" id="P79010">
    <property type="interactions" value="3"/>
</dbReference>
<dbReference type="MINT" id="P79010"/>
<dbReference type="STRING" id="284812.P79010"/>
<dbReference type="iPTMnet" id="P79010"/>
<dbReference type="PaxDb" id="4896-SPAC1296.02.1"/>
<dbReference type="EnsemblFungi" id="SPAC1296.02.1">
    <property type="protein sequence ID" value="SPAC1296.02.1:pep"/>
    <property type="gene ID" value="SPAC1296.02"/>
</dbReference>
<dbReference type="GeneID" id="2543025"/>
<dbReference type="KEGG" id="spo:2543025"/>
<dbReference type="PomBase" id="SPAC1296.02">
    <property type="gene designation" value="cox4"/>
</dbReference>
<dbReference type="VEuPathDB" id="FungiDB:SPAC1296.02"/>
<dbReference type="eggNOG" id="KOG3352">
    <property type="taxonomic scope" value="Eukaryota"/>
</dbReference>
<dbReference type="HOGENOM" id="CLU_091071_0_0_1"/>
<dbReference type="InParanoid" id="P79010"/>
<dbReference type="OMA" id="FDMEPLQ"/>
<dbReference type="PhylomeDB" id="P79010"/>
<dbReference type="Reactome" id="R-SPO-9837999">
    <property type="pathway name" value="Mitochondrial protein degradation"/>
</dbReference>
<dbReference type="UniPathway" id="UPA00705"/>
<dbReference type="PRO" id="PR:P79010"/>
<dbReference type="Proteomes" id="UP000002485">
    <property type="component" value="Chromosome I"/>
</dbReference>
<dbReference type="GO" id="GO:0005743">
    <property type="term" value="C:mitochondrial inner membrane"/>
    <property type="evidence" value="ECO:0000305"/>
    <property type="project" value="PomBase"/>
</dbReference>
<dbReference type="GO" id="GO:0005739">
    <property type="term" value="C:mitochondrion"/>
    <property type="evidence" value="ECO:0007005"/>
    <property type="project" value="PomBase"/>
</dbReference>
<dbReference type="GO" id="GO:0045277">
    <property type="term" value="C:respiratory chain complex IV"/>
    <property type="evidence" value="ECO:0000314"/>
    <property type="project" value="PomBase"/>
</dbReference>
<dbReference type="GO" id="GO:0046872">
    <property type="term" value="F:metal ion binding"/>
    <property type="evidence" value="ECO:0007669"/>
    <property type="project" value="UniProtKB-KW"/>
</dbReference>
<dbReference type="GO" id="GO:0006123">
    <property type="term" value="P:mitochondrial electron transport, cytochrome c to oxygen"/>
    <property type="evidence" value="ECO:0000318"/>
    <property type="project" value="GO_Central"/>
</dbReference>
<dbReference type="GO" id="GO:1902600">
    <property type="term" value="P:proton transmembrane transport"/>
    <property type="evidence" value="ECO:0007669"/>
    <property type="project" value="GOC"/>
</dbReference>
<dbReference type="CDD" id="cd00924">
    <property type="entry name" value="Cyt_c_Oxidase_Vb"/>
    <property type="match status" value="1"/>
</dbReference>
<dbReference type="FunFam" id="2.60.11.10:FF:000003">
    <property type="entry name" value="Cytochrome c oxidase subunit IV"/>
    <property type="match status" value="1"/>
</dbReference>
<dbReference type="Gene3D" id="2.60.11.10">
    <property type="entry name" value="Cytochrome c oxidase, subunit Vb"/>
    <property type="match status" value="1"/>
</dbReference>
<dbReference type="InterPro" id="IPR002124">
    <property type="entry name" value="Cyt_c_oxidase_su5b"/>
</dbReference>
<dbReference type="InterPro" id="IPR036972">
    <property type="entry name" value="Cyt_c_oxidase_su5b_sf"/>
</dbReference>
<dbReference type="PANTHER" id="PTHR10122:SF0">
    <property type="entry name" value="CYTOCHROME C OXIDASE SUBUNIT 5B, ISOFORM A-RELATED"/>
    <property type="match status" value="1"/>
</dbReference>
<dbReference type="PANTHER" id="PTHR10122">
    <property type="entry name" value="CYTOCHROME C OXIDASE SUBUNIT 5B, MITOCHONDRIAL"/>
    <property type="match status" value="1"/>
</dbReference>
<dbReference type="Pfam" id="PF01215">
    <property type="entry name" value="COX5B"/>
    <property type="match status" value="1"/>
</dbReference>
<dbReference type="SUPFAM" id="SSF57802">
    <property type="entry name" value="Rubredoxin-like"/>
    <property type="match status" value="1"/>
</dbReference>
<dbReference type="PROSITE" id="PS00848">
    <property type="entry name" value="COX5B_1"/>
    <property type="match status" value="1"/>
</dbReference>
<dbReference type="PROSITE" id="PS51359">
    <property type="entry name" value="COX5B_2"/>
    <property type="match status" value="1"/>
</dbReference>
<feature type="transit peptide" description="Mitochondrion" evidence="1">
    <location>
        <begin position="1"/>
        <end position="33"/>
    </location>
</feature>
<feature type="chain" id="PRO_0000006113" description="Cytochrome c oxidase subunit 4, mitochondrial">
    <location>
        <begin position="34"/>
        <end position="164"/>
    </location>
</feature>
<feature type="binding site" evidence="3">
    <location>
        <position position="120"/>
    </location>
    <ligand>
        <name>Zn(2+)</name>
        <dbReference type="ChEBI" id="CHEBI:29105"/>
    </ligand>
</feature>
<feature type="binding site" evidence="2">
    <location>
        <position position="128"/>
    </location>
    <ligand>
        <name>Zn(2+)</name>
        <dbReference type="ChEBI" id="CHEBI:29105"/>
    </ligand>
</feature>
<feature type="binding site" evidence="3">
    <location>
        <position position="143"/>
    </location>
    <ligand>
        <name>Zn(2+)</name>
        <dbReference type="ChEBI" id="CHEBI:29105"/>
    </ligand>
</feature>
<feature type="binding site" evidence="3">
    <location>
        <position position="146"/>
    </location>
    <ligand>
        <name>Zn(2+)</name>
        <dbReference type="ChEBI" id="CHEBI:29105"/>
    </ligand>
</feature>
<feature type="helix" evidence="5">
    <location>
        <begin position="40"/>
        <end position="47"/>
    </location>
</feature>
<feature type="helix" evidence="5">
    <location>
        <begin position="52"/>
        <end position="54"/>
    </location>
</feature>
<feature type="turn" evidence="5">
    <location>
        <begin position="68"/>
        <end position="70"/>
    </location>
</feature>
<feature type="helix" evidence="5">
    <location>
        <begin position="75"/>
        <end position="85"/>
    </location>
</feature>
<feature type="strand" evidence="5">
    <location>
        <begin position="107"/>
        <end position="114"/>
    </location>
</feature>
<feature type="strand" evidence="5">
    <location>
        <begin position="117"/>
        <end position="120"/>
    </location>
</feature>
<feature type="turn" evidence="5">
    <location>
        <begin position="124"/>
        <end position="126"/>
    </location>
</feature>
<feature type="strand" evidence="5">
    <location>
        <begin position="131"/>
        <end position="134"/>
    </location>
</feature>
<feature type="turn" evidence="5">
    <location>
        <begin position="144"/>
        <end position="146"/>
    </location>
</feature>
<feature type="strand" evidence="5">
    <location>
        <begin position="149"/>
        <end position="154"/>
    </location>
</feature>
<organism>
    <name type="scientific">Schizosaccharomyces pombe (strain 972 / ATCC 24843)</name>
    <name type="common">Fission yeast</name>
    <dbReference type="NCBI Taxonomy" id="284812"/>
    <lineage>
        <taxon>Eukaryota</taxon>
        <taxon>Fungi</taxon>
        <taxon>Dikarya</taxon>
        <taxon>Ascomycota</taxon>
        <taxon>Taphrinomycotina</taxon>
        <taxon>Schizosaccharomycetes</taxon>
        <taxon>Schizosaccharomycetales</taxon>
        <taxon>Schizosaccharomycetaceae</taxon>
        <taxon>Schizosaccharomyces</taxon>
    </lineage>
</organism>
<protein>
    <recommendedName>
        <fullName>Cytochrome c oxidase subunit 4, mitochondrial</fullName>
    </recommendedName>
    <alternativeName>
        <fullName>Cytochrome c oxidase polypeptide IV</fullName>
    </alternativeName>
</protein>
<keyword id="KW-0002">3D-structure</keyword>
<keyword id="KW-0472">Membrane</keyword>
<keyword id="KW-0479">Metal-binding</keyword>
<keyword id="KW-0496">Mitochondrion</keyword>
<keyword id="KW-0999">Mitochondrion inner membrane</keyword>
<keyword id="KW-1185">Reference proteome</keyword>
<keyword id="KW-0809">Transit peptide</keyword>
<keyword id="KW-0862">Zinc</keyword>
<proteinExistence type="evidence at protein level"/>
<accession>P79010</accession>